<comment type="function">
    <text evidence="1">Catalyzes the ATP- as well as the pyrophosphate-dependent phosphorylation of a specific serine residue in HPr, a phosphocarrier protein of the phosphoenolpyruvate-dependent sugar phosphotransferase system (PTS). HprK/P also catalyzes the pyrophosphate-producing, inorganic phosphate-dependent dephosphorylation (phosphorolysis) of seryl-phosphorylated HPr (P-Ser-HPr). The two antagonistic activities of HprK/P are regulated by several intracellular metabolites, which change their concentration in response to the absence or presence of rapidly metabolisable carbon sources (glucose, fructose, etc.) in the growth medium. Therefore, by controlling the phosphorylation state of HPr, HPrK/P is a sensor enzyme that plays a major role in the regulation of carbon metabolism and sugar transport: it mediates carbon catabolite repression (CCR), and regulates PTS-catalyzed carbohydrate uptake and inducer exclusion.</text>
</comment>
<comment type="catalytic activity">
    <reaction evidence="1">
        <text>[HPr protein]-L-serine + ATP = [HPr protein]-O-phospho-L-serine + ADP + H(+)</text>
        <dbReference type="Rhea" id="RHEA:46600"/>
        <dbReference type="Rhea" id="RHEA-COMP:11602"/>
        <dbReference type="Rhea" id="RHEA-COMP:11603"/>
        <dbReference type="ChEBI" id="CHEBI:15378"/>
        <dbReference type="ChEBI" id="CHEBI:29999"/>
        <dbReference type="ChEBI" id="CHEBI:30616"/>
        <dbReference type="ChEBI" id="CHEBI:83421"/>
        <dbReference type="ChEBI" id="CHEBI:456216"/>
    </reaction>
</comment>
<comment type="catalytic activity">
    <reaction evidence="1">
        <text>[HPr protein]-O-phospho-L-serine + phosphate + H(+) = [HPr protein]-L-serine + diphosphate</text>
        <dbReference type="Rhea" id="RHEA:46604"/>
        <dbReference type="Rhea" id="RHEA-COMP:11602"/>
        <dbReference type="Rhea" id="RHEA-COMP:11603"/>
        <dbReference type="ChEBI" id="CHEBI:15378"/>
        <dbReference type="ChEBI" id="CHEBI:29999"/>
        <dbReference type="ChEBI" id="CHEBI:33019"/>
        <dbReference type="ChEBI" id="CHEBI:43474"/>
        <dbReference type="ChEBI" id="CHEBI:83421"/>
    </reaction>
</comment>
<comment type="cofactor">
    <cofactor evidence="1">
        <name>Mg(2+)</name>
        <dbReference type="ChEBI" id="CHEBI:18420"/>
    </cofactor>
</comment>
<comment type="subunit">
    <text evidence="1">Homohexamer.</text>
</comment>
<comment type="domain">
    <text evidence="1">The Walker A ATP-binding motif also binds Pi and PPi.</text>
</comment>
<comment type="miscellaneous">
    <text evidence="1">Both phosphorylation and phosphorolysis are carried out by the same active site and suggest a common mechanism for both reactions.</text>
</comment>
<comment type="similarity">
    <text evidence="1">Belongs to the HPrK/P family.</text>
</comment>
<gene>
    <name evidence="1" type="primary">hprK</name>
    <name type="ordered locus">LACR_0638</name>
</gene>
<protein>
    <recommendedName>
        <fullName evidence="1">HPr kinase/phosphorylase</fullName>
        <shortName evidence="1">HPrK/P</shortName>
        <ecNumber evidence="1">2.7.11.-</ecNumber>
        <ecNumber evidence="1">2.7.4.-</ecNumber>
    </recommendedName>
    <alternativeName>
        <fullName evidence="1">HPr(Ser) kinase/phosphorylase</fullName>
    </alternativeName>
</protein>
<name>HPRK_LACLS</name>
<organism>
    <name type="scientific">Lactococcus lactis subsp. cremoris (strain SK11)</name>
    <dbReference type="NCBI Taxonomy" id="272622"/>
    <lineage>
        <taxon>Bacteria</taxon>
        <taxon>Bacillati</taxon>
        <taxon>Bacillota</taxon>
        <taxon>Bacilli</taxon>
        <taxon>Lactobacillales</taxon>
        <taxon>Streptococcaceae</taxon>
        <taxon>Lactococcus</taxon>
        <taxon>Lactococcus cremoris subsp. cremoris</taxon>
    </lineage>
</organism>
<evidence type="ECO:0000255" key="1">
    <source>
        <dbReference type="HAMAP-Rule" id="MF_01249"/>
    </source>
</evidence>
<feature type="chain" id="PRO_1000067154" description="HPr kinase/phosphorylase">
    <location>
        <begin position="1"/>
        <end position="310"/>
    </location>
</feature>
<feature type="region of interest" description="Important for the catalytic mechanism of both phosphorylation and dephosphorylation" evidence="1">
    <location>
        <begin position="201"/>
        <end position="210"/>
    </location>
</feature>
<feature type="region of interest" description="Important for the catalytic mechanism of dephosphorylation" evidence="1">
    <location>
        <begin position="264"/>
        <end position="269"/>
    </location>
</feature>
<feature type="active site" evidence="1">
    <location>
        <position position="138"/>
    </location>
</feature>
<feature type="active site" evidence="1">
    <location>
        <position position="159"/>
    </location>
</feature>
<feature type="active site" description="Proton acceptor; for phosphorylation activity. Proton donor; for dephosphorylation activity" evidence="1">
    <location>
        <position position="177"/>
    </location>
</feature>
<feature type="active site" evidence="1">
    <location>
        <position position="243"/>
    </location>
</feature>
<feature type="binding site" evidence="1">
    <location>
        <begin position="153"/>
        <end position="160"/>
    </location>
    <ligand>
        <name>ATP</name>
        <dbReference type="ChEBI" id="CHEBI:30616"/>
    </ligand>
</feature>
<feature type="binding site" evidence="1">
    <location>
        <position position="160"/>
    </location>
    <ligand>
        <name>Mg(2+)</name>
        <dbReference type="ChEBI" id="CHEBI:18420"/>
    </ligand>
</feature>
<feature type="binding site" evidence="1">
    <location>
        <position position="202"/>
    </location>
    <ligand>
        <name>Mg(2+)</name>
        <dbReference type="ChEBI" id="CHEBI:18420"/>
    </ligand>
</feature>
<reference key="1">
    <citation type="journal article" date="2006" name="Proc. Natl. Acad. Sci. U.S.A.">
        <title>Comparative genomics of the lactic acid bacteria.</title>
        <authorList>
            <person name="Makarova K.S."/>
            <person name="Slesarev A."/>
            <person name="Wolf Y.I."/>
            <person name="Sorokin A."/>
            <person name="Mirkin B."/>
            <person name="Koonin E.V."/>
            <person name="Pavlov A."/>
            <person name="Pavlova N."/>
            <person name="Karamychev V."/>
            <person name="Polouchine N."/>
            <person name="Shakhova V."/>
            <person name="Grigoriev I."/>
            <person name="Lou Y."/>
            <person name="Rohksar D."/>
            <person name="Lucas S."/>
            <person name="Huang K."/>
            <person name="Goodstein D.M."/>
            <person name="Hawkins T."/>
            <person name="Plengvidhya V."/>
            <person name="Welker D."/>
            <person name="Hughes J."/>
            <person name="Goh Y."/>
            <person name="Benson A."/>
            <person name="Baldwin K."/>
            <person name="Lee J.-H."/>
            <person name="Diaz-Muniz I."/>
            <person name="Dosti B."/>
            <person name="Smeianov V."/>
            <person name="Wechter W."/>
            <person name="Barabote R."/>
            <person name="Lorca G."/>
            <person name="Altermann E."/>
            <person name="Barrangou R."/>
            <person name="Ganesan B."/>
            <person name="Xie Y."/>
            <person name="Rawsthorne H."/>
            <person name="Tamir D."/>
            <person name="Parker C."/>
            <person name="Breidt F."/>
            <person name="Broadbent J.R."/>
            <person name="Hutkins R."/>
            <person name="O'Sullivan D."/>
            <person name="Steele J."/>
            <person name="Unlu G."/>
            <person name="Saier M.H. Jr."/>
            <person name="Klaenhammer T."/>
            <person name="Richardson P."/>
            <person name="Kozyavkin S."/>
            <person name="Weimer B.C."/>
            <person name="Mills D.A."/>
        </authorList>
    </citation>
    <scope>NUCLEOTIDE SEQUENCE [LARGE SCALE GENOMIC DNA]</scope>
    <source>
        <strain>SK11</strain>
    </source>
</reference>
<sequence>MAVSVQDLLDKIHFHVIYSTETALQKEITTSEIMRPGLEMAGYFDYFTPERIQLFGMKEWSYMMTVVGDNRYDLLKKVMAKETPVVIVARNLEIPSEMVAAAKKADIVLLQSREATSRLNSVLTSFLDERLAERTTVHGVLMDIFGVGVLIQGASGIGKSETGLELVKRGHRLVADDRVDVFQRDAFTLSGEPAEILRNMIEIRGVGIIDVMSLFGAGAVKDSTDIDMVIYLEYYDKEKAFDRLGNAPTIVEFSDVEVPQTRIPVKTGRNVSVIVEAAVMNFRAKQMGFDATKTFEDRLTDLISHNKESQ</sequence>
<dbReference type="EC" id="2.7.11.-" evidence="1"/>
<dbReference type="EC" id="2.7.4.-" evidence="1"/>
<dbReference type="EMBL" id="CP000425">
    <property type="protein sequence ID" value="ABJ72205.1"/>
    <property type="molecule type" value="Genomic_DNA"/>
</dbReference>
<dbReference type="RefSeq" id="WP_011675757.1">
    <property type="nucleotide sequence ID" value="NC_008527.1"/>
</dbReference>
<dbReference type="SMR" id="Q031B7"/>
<dbReference type="KEGG" id="llc:LACR_0638"/>
<dbReference type="HOGENOM" id="CLU_052030_0_1_9"/>
<dbReference type="Proteomes" id="UP000000240">
    <property type="component" value="Chromosome"/>
</dbReference>
<dbReference type="GO" id="GO:0005524">
    <property type="term" value="F:ATP binding"/>
    <property type="evidence" value="ECO:0007669"/>
    <property type="project" value="UniProtKB-UniRule"/>
</dbReference>
<dbReference type="GO" id="GO:0000287">
    <property type="term" value="F:magnesium ion binding"/>
    <property type="evidence" value="ECO:0007669"/>
    <property type="project" value="UniProtKB-UniRule"/>
</dbReference>
<dbReference type="GO" id="GO:0000155">
    <property type="term" value="F:phosphorelay sensor kinase activity"/>
    <property type="evidence" value="ECO:0007669"/>
    <property type="project" value="InterPro"/>
</dbReference>
<dbReference type="GO" id="GO:0004674">
    <property type="term" value="F:protein serine/threonine kinase activity"/>
    <property type="evidence" value="ECO:0007669"/>
    <property type="project" value="UniProtKB-KW"/>
</dbReference>
<dbReference type="GO" id="GO:0004712">
    <property type="term" value="F:protein serine/threonine/tyrosine kinase activity"/>
    <property type="evidence" value="ECO:0007669"/>
    <property type="project" value="UniProtKB-UniRule"/>
</dbReference>
<dbReference type="GO" id="GO:0006109">
    <property type="term" value="P:regulation of carbohydrate metabolic process"/>
    <property type="evidence" value="ECO:0007669"/>
    <property type="project" value="UniProtKB-UniRule"/>
</dbReference>
<dbReference type="CDD" id="cd01918">
    <property type="entry name" value="HprK_C"/>
    <property type="match status" value="1"/>
</dbReference>
<dbReference type="FunFam" id="3.40.50.300:FF:000174">
    <property type="entry name" value="HPr kinase/phosphorylase"/>
    <property type="match status" value="1"/>
</dbReference>
<dbReference type="Gene3D" id="3.40.1390.20">
    <property type="entry name" value="HprK N-terminal domain-like"/>
    <property type="match status" value="1"/>
</dbReference>
<dbReference type="Gene3D" id="3.40.50.300">
    <property type="entry name" value="P-loop containing nucleotide triphosphate hydrolases"/>
    <property type="match status" value="1"/>
</dbReference>
<dbReference type="HAMAP" id="MF_01249">
    <property type="entry name" value="HPr_kinase"/>
    <property type="match status" value="1"/>
</dbReference>
<dbReference type="InterPro" id="IPR003755">
    <property type="entry name" value="HPr(Ser)_kin/Pase"/>
</dbReference>
<dbReference type="InterPro" id="IPR011104">
    <property type="entry name" value="Hpr_kin/Pase_C"/>
</dbReference>
<dbReference type="InterPro" id="IPR011126">
    <property type="entry name" value="Hpr_kin/Pase_Hpr_N"/>
</dbReference>
<dbReference type="InterPro" id="IPR027417">
    <property type="entry name" value="P-loop_NTPase"/>
</dbReference>
<dbReference type="InterPro" id="IPR028979">
    <property type="entry name" value="Ser_kin/Pase_Hpr-like_N_sf"/>
</dbReference>
<dbReference type="NCBIfam" id="TIGR00679">
    <property type="entry name" value="hpr-ser"/>
    <property type="match status" value="1"/>
</dbReference>
<dbReference type="PANTHER" id="PTHR30305:SF1">
    <property type="entry name" value="HPR KINASE_PHOSPHORYLASE"/>
    <property type="match status" value="1"/>
</dbReference>
<dbReference type="PANTHER" id="PTHR30305">
    <property type="entry name" value="PROTEIN YJDM-RELATED"/>
    <property type="match status" value="1"/>
</dbReference>
<dbReference type="Pfam" id="PF07475">
    <property type="entry name" value="Hpr_kinase_C"/>
    <property type="match status" value="1"/>
</dbReference>
<dbReference type="Pfam" id="PF02603">
    <property type="entry name" value="Hpr_kinase_N"/>
    <property type="match status" value="1"/>
</dbReference>
<dbReference type="SUPFAM" id="SSF75138">
    <property type="entry name" value="HprK N-terminal domain-like"/>
    <property type="match status" value="1"/>
</dbReference>
<dbReference type="SUPFAM" id="SSF53795">
    <property type="entry name" value="PEP carboxykinase-like"/>
    <property type="match status" value="1"/>
</dbReference>
<accession>Q031B7</accession>
<proteinExistence type="inferred from homology"/>
<keyword id="KW-0067">ATP-binding</keyword>
<keyword id="KW-0119">Carbohydrate metabolism</keyword>
<keyword id="KW-0418">Kinase</keyword>
<keyword id="KW-0460">Magnesium</keyword>
<keyword id="KW-0479">Metal-binding</keyword>
<keyword id="KW-0511">Multifunctional enzyme</keyword>
<keyword id="KW-0547">Nucleotide-binding</keyword>
<keyword id="KW-0723">Serine/threonine-protein kinase</keyword>
<keyword id="KW-0808">Transferase</keyword>